<proteinExistence type="inferred from homology"/>
<organism>
    <name type="scientific">Lens culinaris</name>
    <name type="common">Lentil</name>
    <name type="synonym">Cicer lens</name>
    <dbReference type="NCBI Taxonomy" id="3864"/>
    <lineage>
        <taxon>Eukaryota</taxon>
        <taxon>Viridiplantae</taxon>
        <taxon>Streptophyta</taxon>
        <taxon>Embryophyta</taxon>
        <taxon>Tracheophyta</taxon>
        <taxon>Spermatophyta</taxon>
        <taxon>Magnoliopsida</taxon>
        <taxon>eudicotyledons</taxon>
        <taxon>Gunneridae</taxon>
        <taxon>Pentapetalae</taxon>
        <taxon>rosids</taxon>
        <taxon>fabids</taxon>
        <taxon>Fabales</taxon>
        <taxon>Fabaceae</taxon>
        <taxon>Papilionoideae</taxon>
        <taxon>50 kb inversion clade</taxon>
        <taxon>NPAAA clade</taxon>
        <taxon>Hologalegina</taxon>
        <taxon>IRL clade</taxon>
        <taxon>Fabeae</taxon>
        <taxon>Lens</taxon>
    </lineage>
</organism>
<sequence>MARSMNLACVALVMCMVVIAPMAEAAVSCGTVTGDLAPCIPYLTGGAGPTDSCCAGVKKLLAAAPTTADRQAACNCLKTAAGNINNLNPGNAAALPGKCNVNIPYKISTTTNCNTIKF</sequence>
<reference key="1">
    <citation type="journal article" date="2007" name="Biochemistry (Mosc.)">
        <title>Purification and primary structure of novel lipid transfer proteins from germinated lentil (Lens culinaris) seeds.</title>
        <authorList>
            <person name="Finkina E.I."/>
            <person name="Balandin S.V."/>
            <person name="Serebryakova M.V."/>
            <person name="Potapenko N.A."/>
            <person name="Tagaev A.A."/>
            <person name="Ovchinnikova T.V."/>
        </authorList>
    </citation>
    <scope>NUCLEOTIDE SEQUENCE [MRNA]</scope>
    <source>
        <tissue>Seedling</tissue>
    </source>
</reference>
<dbReference type="EMBL" id="AY793555">
    <property type="protein sequence ID" value="AAX35808.1"/>
    <property type="molecule type" value="mRNA"/>
</dbReference>
<dbReference type="SMR" id="A0AT30"/>
<dbReference type="Allergome" id="8712">
    <property type="allergen name" value="Len c 3"/>
</dbReference>
<dbReference type="GO" id="GO:0008289">
    <property type="term" value="F:lipid binding"/>
    <property type="evidence" value="ECO:0007669"/>
    <property type="project" value="UniProtKB-KW"/>
</dbReference>
<dbReference type="GO" id="GO:0006869">
    <property type="term" value="P:lipid transport"/>
    <property type="evidence" value="ECO:0007669"/>
    <property type="project" value="InterPro"/>
</dbReference>
<dbReference type="CDD" id="cd01960">
    <property type="entry name" value="nsLTP1"/>
    <property type="match status" value="1"/>
</dbReference>
<dbReference type="FunFam" id="1.10.110.10:FF:000002">
    <property type="entry name" value="Non-specific lipid-transfer protein"/>
    <property type="match status" value="1"/>
</dbReference>
<dbReference type="Gene3D" id="1.10.110.10">
    <property type="entry name" value="Plant lipid-transfer and hydrophobic proteins"/>
    <property type="match status" value="1"/>
</dbReference>
<dbReference type="InterPro" id="IPR036312">
    <property type="entry name" value="Bifun_inhib/LTP/seed_sf"/>
</dbReference>
<dbReference type="InterPro" id="IPR016140">
    <property type="entry name" value="Bifunc_inhib/LTP/seed_store"/>
</dbReference>
<dbReference type="InterPro" id="IPR000528">
    <property type="entry name" value="Plant_nsLTP"/>
</dbReference>
<dbReference type="PANTHER" id="PTHR33076">
    <property type="entry name" value="NON-SPECIFIC LIPID-TRANSFER PROTEIN 2-RELATED"/>
    <property type="match status" value="1"/>
</dbReference>
<dbReference type="Pfam" id="PF00234">
    <property type="entry name" value="Tryp_alpha_amyl"/>
    <property type="match status" value="1"/>
</dbReference>
<dbReference type="PRINTS" id="PR00382">
    <property type="entry name" value="LIPIDTRNSFER"/>
</dbReference>
<dbReference type="SMART" id="SM00499">
    <property type="entry name" value="AAI"/>
    <property type="match status" value="1"/>
</dbReference>
<dbReference type="SUPFAM" id="SSF47699">
    <property type="entry name" value="Bifunctional inhibitor/lipid-transfer protein/seed storage 2S albumin"/>
    <property type="match status" value="1"/>
</dbReference>
<dbReference type="PROSITE" id="PS00597">
    <property type="entry name" value="PLANT_LTP"/>
    <property type="match status" value="1"/>
</dbReference>
<keyword id="KW-1015">Disulfide bond</keyword>
<keyword id="KW-0446">Lipid-binding</keyword>
<keyword id="KW-0732">Signal</keyword>
<keyword id="KW-0813">Transport</keyword>
<accession>A0AT30</accession>
<name>NLTP3_LENCU</name>
<evidence type="ECO:0000250" key="1">
    <source>
        <dbReference type="UniProtKB" id="P23096"/>
    </source>
</evidence>
<evidence type="ECO:0000255" key="2"/>
<comment type="function">
    <text>Plant non-specific lipid-transfer proteins transfer phospholipids as well as galactolipids across membranes. May play a role in wax or cutin deposition in the cell walls of expanding epidermal cells and certain secretory tissues.</text>
</comment>
<comment type="similarity">
    <text evidence="2">Belongs to the plant LTP family.</text>
</comment>
<feature type="signal peptide" evidence="2">
    <location>
        <begin position="1"/>
        <end position="25"/>
    </location>
</feature>
<feature type="chain" id="PRO_5000147975" description="Non-specific lipid-transfer protein 3">
    <location>
        <begin position="26"/>
        <end position="118"/>
    </location>
</feature>
<feature type="disulfide bond" evidence="1">
    <location>
        <begin position="29"/>
        <end position="76"/>
    </location>
</feature>
<feature type="disulfide bond" evidence="1">
    <location>
        <begin position="39"/>
        <end position="53"/>
    </location>
</feature>
<feature type="disulfide bond" evidence="1">
    <location>
        <begin position="54"/>
        <end position="99"/>
    </location>
</feature>
<feature type="disulfide bond" evidence="1">
    <location>
        <begin position="74"/>
        <end position="113"/>
    </location>
</feature>
<protein>
    <recommendedName>
        <fullName>Non-specific lipid-transfer protein 3</fullName>
        <shortName>LTP3</shortName>
    </recommendedName>
</protein>